<organism>
    <name type="scientific">Buthus occitanus tunetanus</name>
    <name type="common">Common European scorpion</name>
    <name type="synonym">Buthus tunetanus</name>
    <dbReference type="NCBI Taxonomy" id="6871"/>
    <lineage>
        <taxon>Eukaryota</taxon>
        <taxon>Metazoa</taxon>
        <taxon>Ecdysozoa</taxon>
        <taxon>Arthropoda</taxon>
        <taxon>Chelicerata</taxon>
        <taxon>Arachnida</taxon>
        <taxon>Scorpiones</taxon>
        <taxon>Buthida</taxon>
        <taxon>Buthoidea</taxon>
        <taxon>Buthidae</taxon>
        <taxon>Buthus</taxon>
    </lineage>
</organism>
<feature type="chain" id="PRO_0000066715" description="Beta-insect depressant toxin BotIT4">
    <location>
        <begin position="1"/>
        <end position="61"/>
    </location>
</feature>
<feature type="domain" description="LCN-type CS-alpha/beta" evidence="1">
    <location>
        <begin position="1"/>
        <end position="61"/>
    </location>
</feature>
<feature type="modified residue" description="Glycine amide" evidence="2">
    <location>
        <position position="61"/>
    </location>
</feature>
<feature type="disulfide bond" evidence="1">
    <location>
        <begin position="10"/>
        <end position="60"/>
    </location>
</feature>
<feature type="disulfide bond" evidence="1">
    <location>
        <begin position="14"/>
        <end position="35"/>
    </location>
</feature>
<feature type="disulfide bond" evidence="1">
    <location>
        <begin position="21"/>
        <end position="42"/>
    </location>
</feature>
<feature type="disulfide bond" evidence="1">
    <location>
        <begin position="25"/>
        <end position="44"/>
    </location>
</feature>
<dbReference type="SMR" id="P55903"/>
<dbReference type="GO" id="GO:0005576">
    <property type="term" value="C:extracellular region"/>
    <property type="evidence" value="ECO:0007669"/>
    <property type="project" value="UniProtKB-SubCell"/>
</dbReference>
<dbReference type="GO" id="GO:0019871">
    <property type="term" value="F:sodium channel inhibitor activity"/>
    <property type="evidence" value="ECO:0007669"/>
    <property type="project" value="InterPro"/>
</dbReference>
<dbReference type="GO" id="GO:0090729">
    <property type="term" value="F:toxin activity"/>
    <property type="evidence" value="ECO:0007669"/>
    <property type="project" value="UniProtKB-KW"/>
</dbReference>
<dbReference type="GO" id="GO:0006952">
    <property type="term" value="P:defense response"/>
    <property type="evidence" value="ECO:0007669"/>
    <property type="project" value="InterPro"/>
</dbReference>
<dbReference type="CDD" id="cd23106">
    <property type="entry name" value="neurotoxins_LC_scorpion"/>
    <property type="match status" value="1"/>
</dbReference>
<dbReference type="FunFam" id="3.30.30.10:FF:000002">
    <property type="entry name" value="Alpha-like toxin BmK-M1"/>
    <property type="match status" value="1"/>
</dbReference>
<dbReference type="Gene3D" id="3.30.30.10">
    <property type="entry name" value="Knottin, scorpion toxin-like"/>
    <property type="match status" value="1"/>
</dbReference>
<dbReference type="InterPro" id="IPR044062">
    <property type="entry name" value="LCN-type_CS_alpha_beta_dom"/>
</dbReference>
<dbReference type="InterPro" id="IPR003614">
    <property type="entry name" value="Scorpion_toxin-like"/>
</dbReference>
<dbReference type="InterPro" id="IPR036574">
    <property type="entry name" value="Scorpion_toxin-like_sf"/>
</dbReference>
<dbReference type="InterPro" id="IPR018218">
    <property type="entry name" value="Scorpion_toxinL"/>
</dbReference>
<dbReference type="InterPro" id="IPR002061">
    <property type="entry name" value="Scorpion_toxinL/defensin"/>
</dbReference>
<dbReference type="Pfam" id="PF00537">
    <property type="entry name" value="Toxin_3"/>
    <property type="match status" value="1"/>
</dbReference>
<dbReference type="PRINTS" id="PR00285">
    <property type="entry name" value="SCORPNTOXIN"/>
</dbReference>
<dbReference type="SMART" id="SM00505">
    <property type="entry name" value="Knot1"/>
    <property type="match status" value="1"/>
</dbReference>
<dbReference type="SUPFAM" id="SSF57095">
    <property type="entry name" value="Scorpion toxin-like"/>
    <property type="match status" value="1"/>
</dbReference>
<dbReference type="PROSITE" id="PS51863">
    <property type="entry name" value="LCN_CSAB"/>
    <property type="match status" value="1"/>
</dbReference>
<proteinExistence type="evidence at protein level"/>
<reference key="1">
    <citation type="journal article" date="1997" name="Toxicon">
        <title>Purification, structure and activity of three insect toxins from Buthus occitanus tunetanus venom.</title>
        <authorList>
            <person name="Borchani L."/>
            <person name="Stankiewicz M."/>
            <person name="Kopeyan C."/>
            <person name="Mansuelle P."/>
            <person name="Kharrat R."/>
            <person name="Cestele S."/>
            <person name="Karoui H."/>
            <person name="Rochat H."/>
            <person name="Pelhate M."/>
            <person name="el Ayeb M."/>
        </authorList>
    </citation>
    <scope>PROTEIN SEQUENCE</scope>
    <scope>AMIDATION AT GLY-61</scope>
    <scope>FUNCTION</scope>
    <scope>TOXIC DOSE</scope>
    <scope>MASS SPECTROMETRY</scope>
    <source>
        <tissue>Venom</tissue>
    </source>
</reference>
<evidence type="ECO:0000255" key="1">
    <source>
        <dbReference type="PROSITE-ProRule" id="PRU01210"/>
    </source>
</evidence>
<evidence type="ECO:0000269" key="2">
    <source>
    </source>
</evidence>
<evidence type="ECO:0000305" key="3"/>
<keyword id="KW-0027">Amidation</keyword>
<keyword id="KW-0903">Direct protein sequencing</keyword>
<keyword id="KW-1015">Disulfide bond</keyword>
<keyword id="KW-0872">Ion channel impairing toxin</keyword>
<keyword id="KW-0528">Neurotoxin</keyword>
<keyword id="KW-0964">Secreted</keyword>
<keyword id="KW-0800">Toxin</keyword>
<keyword id="KW-0738">Voltage-gated sodium channel impairing toxin</keyword>
<sequence length="61" mass="6845">DGYIRRRDGCKVSCLFGNEGCDKECKAYGGSYGYCWTWGLACWCEGLPDDKTWKSETNTCG</sequence>
<name>SIX4_BUTOC</name>
<protein>
    <recommendedName>
        <fullName>Beta-insect depressant toxin BotIT4</fullName>
        <shortName>Insect toxin 4</shortName>
    </recommendedName>
</protein>
<accession>P55903</accession>
<comment type="function">
    <text evidence="2">Depressant insect beta-toxins cause a transient contraction paralysis followed by a slow flaccid paralysis. They bind voltage-independently at site-4 of sodium channels (Nav) and shift the voltage of activation toward more negative potentials thereby affecting sodium channel activation and promoting spontaneous and repetitive firing. This toxin is active only on insects.</text>
</comment>
<comment type="subcellular location">
    <subcellularLocation>
        <location>Secreted</location>
    </subcellularLocation>
</comment>
<comment type="tissue specificity">
    <text>Expressed by the venom gland.</text>
</comment>
<comment type="domain">
    <text evidence="3">Has the structural arrangement of an alpha-helix connected to antiparallel beta-sheets by disulfide bonds (CS-alpha/beta).</text>
</comment>
<comment type="mass spectrometry" mass="6836.25" error="0.89" method="Electrospray" evidence="2"/>
<comment type="toxic dose">
    <text evidence="2">LD(50) is 1.1 ug/g in Blattella germanica.</text>
</comment>
<comment type="similarity">
    <text evidence="3">Belongs to the long (4 C-C) scorpion toxin superfamily. Sodium channel inhibitor family. Beta subfamily.</text>
</comment>